<gene>
    <name type="primary">cueO</name>
    <name evidence="6" type="synonym">cuiD</name>
    <name type="ordered locus">STM0168</name>
</gene>
<comment type="function">
    <text evidence="1 4 5">Multicopper oxidase involved in copper homeostasis and copper tolerance under both aerobic and anaerobic conditions (PubMed:12442888, PubMed:17768242). Is responsible for the oxidation of Cu(+) to the less harmful Cu(2+) in the periplasm, thereby preventing Cu(+) from entering the cytoplasm (By similarity).</text>
</comment>
<comment type="catalytic activity">
    <reaction evidence="1">
        <text>4 Cu(+) + O2 + 4 H(+) = 4 Cu(2+) + 2 H2O</text>
        <dbReference type="Rhea" id="RHEA:30083"/>
        <dbReference type="ChEBI" id="CHEBI:15377"/>
        <dbReference type="ChEBI" id="CHEBI:15378"/>
        <dbReference type="ChEBI" id="CHEBI:15379"/>
        <dbReference type="ChEBI" id="CHEBI:29036"/>
        <dbReference type="ChEBI" id="CHEBI:49552"/>
        <dbReference type="EC" id="1.16.3.4"/>
    </reaction>
    <physiologicalReaction direction="left-to-right" evidence="1">
        <dbReference type="Rhea" id="RHEA:30084"/>
    </physiologicalReaction>
</comment>
<comment type="cofactor">
    <cofactor evidence="1">
        <name>Cu cation</name>
        <dbReference type="ChEBI" id="CHEBI:23378"/>
    </cofactor>
    <text evidence="1">Binds 4 Cu cations per monomer.</text>
</comment>
<comment type="subunit">
    <text evidence="1">Monomer.</text>
</comment>
<comment type="subcellular location">
    <subcellularLocation>
        <location evidence="1">Periplasm</location>
    </subcellularLocation>
</comment>
<comment type="induction">
    <text evidence="5">By CueR, at increased levels of cytoplasmic cuprous ions.</text>
</comment>
<comment type="PTM">
    <text evidence="3">Predicted to be exported by the Tat system. The position of the signal peptide cleavage has not been experimentally proven.</text>
</comment>
<comment type="disruption phenotype">
    <text evidence="4 5">Mutant is very sensitive to copper after copper shock (PubMed:12442888). Causes a moderate defect in aerobic growth on CuSO(4), strongly impairs survival during anaerobic growth on CuSO(4) (PubMed:17768242).</text>
</comment>
<comment type="similarity">
    <text evidence="7">Belongs to the multicopper oxidase family.</text>
</comment>
<evidence type="ECO:0000250" key="1">
    <source>
        <dbReference type="UniProtKB" id="P36649"/>
    </source>
</evidence>
<evidence type="ECO:0000255" key="2"/>
<evidence type="ECO:0000255" key="3">
    <source>
        <dbReference type="PROSITE-ProRule" id="PRU00648"/>
    </source>
</evidence>
<evidence type="ECO:0000269" key="4">
    <source>
    </source>
</evidence>
<evidence type="ECO:0000269" key="5">
    <source>
    </source>
</evidence>
<evidence type="ECO:0000303" key="6">
    <source>
    </source>
</evidence>
<evidence type="ECO:0000305" key="7"/>
<feature type="signal peptide" description="Tat-type signal" evidence="3">
    <location>
        <begin position="1"/>
        <end position="28"/>
    </location>
</feature>
<feature type="chain" id="PRO_0000002954" description="Multicopper oxidase CueO">
    <location>
        <begin position="29"/>
        <end position="536"/>
    </location>
</feature>
<feature type="domain" description="Plastocyanin-like 1" evidence="2">
    <location>
        <begin position="53"/>
        <end position="165"/>
    </location>
</feature>
<feature type="domain" description="Plastocyanin-like 2" evidence="2">
    <location>
        <begin position="229"/>
        <end position="295"/>
    </location>
</feature>
<feature type="domain" description="Plastocyanin-like 3" evidence="2">
    <location>
        <begin position="424"/>
        <end position="536"/>
    </location>
</feature>
<feature type="binding site" description="type 2 copper site" evidence="1">
    <location>
        <position position="101"/>
    </location>
    <ligand>
        <name>Cu cation</name>
        <dbReference type="ChEBI" id="CHEBI:23378"/>
        <label>1</label>
    </ligand>
</feature>
<feature type="binding site" description="type 3 copper site" evidence="1">
    <location>
        <position position="103"/>
    </location>
    <ligand>
        <name>Cu cation</name>
        <dbReference type="ChEBI" id="CHEBI:23378"/>
        <label>2</label>
    </ligand>
</feature>
<feature type="binding site" description="type 3 copper site" evidence="1">
    <location>
        <position position="141"/>
    </location>
    <ligand>
        <name>Cu cation</name>
        <dbReference type="ChEBI" id="CHEBI:23378"/>
        <label>2</label>
    </ligand>
</feature>
<feature type="binding site" description="type 3 copper site" evidence="1">
    <location>
        <position position="143"/>
    </location>
    <ligand>
        <name>Cu cation</name>
        <dbReference type="ChEBI" id="CHEBI:23378"/>
        <label>3</label>
    </ligand>
</feature>
<feature type="binding site" description="type 1 copper site" evidence="1">
    <location>
        <position position="463"/>
    </location>
    <ligand>
        <name>Cu cation</name>
        <dbReference type="ChEBI" id="CHEBI:23378"/>
        <label>4</label>
    </ligand>
</feature>
<feature type="binding site" description="type 2 copper site" evidence="1">
    <location>
        <position position="466"/>
    </location>
    <ligand>
        <name>Cu cation</name>
        <dbReference type="ChEBI" id="CHEBI:23378"/>
        <label>1</label>
    </ligand>
</feature>
<feature type="binding site" description="type 3 copper site" evidence="1">
    <location>
        <position position="468"/>
    </location>
    <ligand>
        <name>Cu cation</name>
        <dbReference type="ChEBI" id="CHEBI:23378"/>
        <label>3</label>
    </ligand>
</feature>
<feature type="binding site" description="type 3 copper site" evidence="1">
    <location>
        <position position="519"/>
    </location>
    <ligand>
        <name>Cu cation</name>
        <dbReference type="ChEBI" id="CHEBI:23378"/>
        <label>3</label>
    </ligand>
</feature>
<feature type="binding site" description="type 1 copper site" evidence="1">
    <location>
        <position position="520"/>
    </location>
    <ligand>
        <name>Cu cation</name>
        <dbReference type="ChEBI" id="CHEBI:23378"/>
        <label>4</label>
    </ligand>
</feature>
<feature type="binding site" description="type 3 copper site" evidence="1">
    <location>
        <position position="521"/>
    </location>
    <ligand>
        <name>Cu cation</name>
        <dbReference type="ChEBI" id="CHEBI:23378"/>
        <label>2</label>
    </ligand>
</feature>
<feature type="binding site" description="type 1 copper site" evidence="1">
    <location>
        <position position="525"/>
    </location>
    <ligand>
        <name>Cu cation</name>
        <dbReference type="ChEBI" id="CHEBI:23378"/>
        <label>4</label>
    </ligand>
</feature>
<feature type="sequence conflict" description="In Ref. 1; AAL15149." evidence="7" ref="1">
    <original>LR</original>
    <variation>AA</variation>
    <location>
        <begin position="322"/>
        <end position="323"/>
    </location>
</feature>
<feature type="sequence conflict" description="In Ref. 1; AAL15149." evidence="7" ref="1">
    <original>L</original>
    <variation>F</variation>
    <location>
        <position position="334"/>
    </location>
</feature>
<name>CUEO_SALTY</name>
<organism>
    <name type="scientific">Salmonella typhimurium (strain LT2 / SGSC1412 / ATCC 700720)</name>
    <dbReference type="NCBI Taxonomy" id="99287"/>
    <lineage>
        <taxon>Bacteria</taxon>
        <taxon>Pseudomonadati</taxon>
        <taxon>Pseudomonadota</taxon>
        <taxon>Gammaproteobacteria</taxon>
        <taxon>Enterobacterales</taxon>
        <taxon>Enterobacteriaceae</taxon>
        <taxon>Salmonella</taxon>
    </lineage>
</organism>
<proteinExistence type="evidence at protein level"/>
<sequence>MLRRDFLKYSVALGVASALPLWSRAAFAAERPALPIPDLLTADASNRMQLIVKAGQSTFAGKNATTWGYNGNLLGPAVQLHKGKSVTVDIHNQLAEDTTLHWHGLEIPGIVDGGPQGIIPAGGTRTVTFTPEQRAATCWIHPHKHGKTGRQVAMGLAGLVLIEDDEIRKLRLPKQWGIDDVPVIIQDKRFSADGQIDYQLDIMTAAVGWFGDTLLTNGAIYPQHSAPKGWLRLRLLNGCNARSLNIAASDNRPLYVIASDGGLLAEPVKVTELPLLMGERFEVLVDISDGKAFDLVTLPVSQMGMAIAPFDKPHPVMRIQPLRITASGTLPDTLTTMPALPSLEGLTVRNLKLSMDPRLDMMGMQMLMKKYGAQAMSGMDHDSMNAHMQGGNMGHGEMDHGNMDHSGMNHGAMGNMNHGGKFDFHNANFINGQVFDMNKPMFAAQKGRHERWVISGVGDMMLHPFHIHGTQFRILSENGKAPAAHRTGWKDTVRVEGGISEVLVKFDHDAPKEHAYMAHCHLLEHEDTGMMLGFTV</sequence>
<keyword id="KW-0186">Copper</keyword>
<keyword id="KW-0479">Metal-binding</keyword>
<keyword id="KW-0560">Oxidoreductase</keyword>
<keyword id="KW-0574">Periplasm</keyword>
<keyword id="KW-1185">Reference proteome</keyword>
<keyword id="KW-0677">Repeat</keyword>
<keyword id="KW-0732">Signal</keyword>
<accession>Q8ZRS2</accession>
<accession>Q938E6</accession>
<dbReference type="EC" id="1.16.3.4" evidence="1"/>
<dbReference type="EMBL" id="AY053392">
    <property type="protein sequence ID" value="AAL15149.1"/>
    <property type="molecule type" value="Genomic_DNA"/>
</dbReference>
<dbReference type="EMBL" id="AE006468">
    <property type="protein sequence ID" value="AAL19132.1"/>
    <property type="molecule type" value="Genomic_DNA"/>
</dbReference>
<dbReference type="RefSeq" id="NP_459173.1">
    <property type="nucleotide sequence ID" value="NC_003197.2"/>
</dbReference>
<dbReference type="RefSeq" id="WP_000946047.1">
    <property type="nucleotide sequence ID" value="NC_003197.2"/>
</dbReference>
<dbReference type="SMR" id="Q8ZRS2"/>
<dbReference type="STRING" id="99287.STM0168"/>
<dbReference type="PaxDb" id="99287-STM0168"/>
<dbReference type="GeneID" id="1251686"/>
<dbReference type="KEGG" id="stm:STM0168"/>
<dbReference type="PATRIC" id="fig|99287.12.peg.178"/>
<dbReference type="HOGENOM" id="CLU_009100_2_4_6"/>
<dbReference type="OMA" id="YQLDVMS"/>
<dbReference type="PhylomeDB" id="Q8ZRS2"/>
<dbReference type="BioCyc" id="SENT99287:STM0168-MONOMER"/>
<dbReference type="SABIO-RK" id="Q8ZRS2"/>
<dbReference type="Proteomes" id="UP000001014">
    <property type="component" value="Chromosome"/>
</dbReference>
<dbReference type="GO" id="GO:0030288">
    <property type="term" value="C:outer membrane-bounded periplasmic space"/>
    <property type="evidence" value="ECO:0000318"/>
    <property type="project" value="GO_Central"/>
</dbReference>
<dbReference type="GO" id="GO:0005507">
    <property type="term" value="F:copper ion binding"/>
    <property type="evidence" value="ECO:0007669"/>
    <property type="project" value="InterPro"/>
</dbReference>
<dbReference type="GO" id="GO:0004322">
    <property type="term" value="F:ferroxidase activity"/>
    <property type="evidence" value="ECO:0000318"/>
    <property type="project" value="GO_Central"/>
</dbReference>
<dbReference type="CDD" id="cd13867">
    <property type="entry name" value="CuRO_2_CueO_FtsP"/>
    <property type="match status" value="1"/>
</dbReference>
<dbReference type="CDD" id="cd13890">
    <property type="entry name" value="CuRO_3_CueO_FtsP"/>
    <property type="match status" value="1"/>
</dbReference>
<dbReference type="FunFam" id="2.60.40.420:FF:000039">
    <property type="entry name" value="Blue copper oxidase CueO"/>
    <property type="match status" value="1"/>
</dbReference>
<dbReference type="FunFam" id="2.60.40.420:FF:000041">
    <property type="entry name" value="Blue copper oxidase CueO"/>
    <property type="match status" value="1"/>
</dbReference>
<dbReference type="FunFam" id="2.60.40.420:FF:000043">
    <property type="entry name" value="Blue copper oxidase CueO"/>
    <property type="match status" value="1"/>
</dbReference>
<dbReference type="Gene3D" id="2.60.40.420">
    <property type="entry name" value="Cupredoxins - blue copper proteins"/>
    <property type="match status" value="3"/>
</dbReference>
<dbReference type="InterPro" id="IPR011707">
    <property type="entry name" value="Cu-oxidase-like_N"/>
</dbReference>
<dbReference type="InterPro" id="IPR011706">
    <property type="entry name" value="Cu-oxidase_C"/>
</dbReference>
<dbReference type="InterPro" id="IPR045087">
    <property type="entry name" value="Cu-oxidase_fam"/>
</dbReference>
<dbReference type="InterPro" id="IPR002355">
    <property type="entry name" value="Cu_oxidase_Cu_BS"/>
</dbReference>
<dbReference type="InterPro" id="IPR008972">
    <property type="entry name" value="Cupredoxin"/>
</dbReference>
<dbReference type="InterPro" id="IPR006311">
    <property type="entry name" value="TAT_signal"/>
</dbReference>
<dbReference type="NCBIfam" id="NF008205">
    <property type="entry name" value="PRK10965.1"/>
    <property type="match status" value="1"/>
</dbReference>
<dbReference type="PANTHER" id="PTHR48267:SF1">
    <property type="entry name" value="BILIRUBIN OXIDASE"/>
    <property type="match status" value="1"/>
</dbReference>
<dbReference type="PANTHER" id="PTHR48267">
    <property type="entry name" value="CUPREDOXIN SUPERFAMILY PROTEIN"/>
    <property type="match status" value="1"/>
</dbReference>
<dbReference type="Pfam" id="PF07731">
    <property type="entry name" value="Cu-oxidase_2"/>
    <property type="match status" value="1"/>
</dbReference>
<dbReference type="Pfam" id="PF07732">
    <property type="entry name" value="Cu-oxidase_3"/>
    <property type="match status" value="1"/>
</dbReference>
<dbReference type="SUPFAM" id="SSF49503">
    <property type="entry name" value="Cupredoxins"/>
    <property type="match status" value="3"/>
</dbReference>
<dbReference type="PROSITE" id="PS00080">
    <property type="entry name" value="MULTICOPPER_OXIDASE2"/>
    <property type="match status" value="1"/>
</dbReference>
<dbReference type="PROSITE" id="PS51318">
    <property type="entry name" value="TAT"/>
    <property type="match status" value="1"/>
</dbReference>
<reference key="1">
    <citation type="journal article" date="2002" name="Mol. Cells">
        <title>CuiD is a crucial gene for survival at high copper environment in Salmonella enterica serovar Typhimurium.</title>
        <authorList>
            <person name="Lim S.Y."/>
            <person name="Joe M.H."/>
            <person name="Song S.S."/>
            <person name="Lee M.H."/>
            <person name="Foster J.W."/>
            <person name="Park Y.K."/>
            <person name="Choi S.Y."/>
            <person name="Lee I.S."/>
        </authorList>
    </citation>
    <scope>NUCLEOTIDE SEQUENCE [GENOMIC DNA]</scope>
    <scope>FUNCTION</scope>
    <scope>DISRUPTION PHENOTYPE</scope>
</reference>
<reference key="2">
    <citation type="journal article" date="2001" name="Nature">
        <title>Complete genome sequence of Salmonella enterica serovar Typhimurium LT2.</title>
        <authorList>
            <person name="McClelland M."/>
            <person name="Sanderson K.E."/>
            <person name="Spieth J."/>
            <person name="Clifton S.W."/>
            <person name="Latreille P."/>
            <person name="Courtney L."/>
            <person name="Porwollik S."/>
            <person name="Ali J."/>
            <person name="Dante M."/>
            <person name="Du F."/>
            <person name="Hou S."/>
            <person name="Layman D."/>
            <person name="Leonard S."/>
            <person name="Nguyen C."/>
            <person name="Scott K."/>
            <person name="Holmes A."/>
            <person name="Grewal N."/>
            <person name="Mulvaney E."/>
            <person name="Ryan E."/>
            <person name="Sun H."/>
            <person name="Florea L."/>
            <person name="Miller W."/>
            <person name="Stoneking T."/>
            <person name="Nhan M."/>
            <person name="Waterston R."/>
            <person name="Wilson R.K."/>
        </authorList>
    </citation>
    <scope>NUCLEOTIDE SEQUENCE [LARGE SCALE GENOMIC DNA]</scope>
    <source>
        <strain>LT2 / SGSC1412 / ATCC 700720</strain>
    </source>
</reference>
<reference key="3">
    <citation type="journal article" date="2007" name="Microbiology">
        <title>Dissecting the Salmonella response to copper.</title>
        <authorList>
            <person name="Espariz M."/>
            <person name="Checa S.K."/>
            <person name="Perez Audero M.E."/>
            <person name="Pontel L.B."/>
            <person name="Soncini F.C."/>
        </authorList>
    </citation>
    <scope>FUNCTION IN COPPER TOLERANCE</scope>
    <scope>REGULATION BY CUER</scope>
    <scope>INDUCTION BY COPPER</scope>
    <scope>DISRUPTION PHENOTYPE</scope>
    <source>
        <strain>ATCC 14028s / SGSG 2262</strain>
    </source>
</reference>
<protein>
    <recommendedName>
        <fullName evidence="1">Multicopper oxidase CueO</fullName>
        <shortName evidence="1">MCO</shortName>
        <ecNumber evidence="1">1.16.3.4</ecNumber>
    </recommendedName>
    <alternativeName>
        <fullName evidence="1">Copper efflux oxidase</fullName>
        <shortName evidence="1">Cu efflux oxidase</shortName>
    </alternativeName>
    <alternativeName>
        <fullName evidence="1">Cuprous oxidase</fullName>
    </alternativeName>
</protein>